<feature type="chain" id="PRO_1000147950" description="Fumarate reductase subunit C">
    <location>
        <begin position="1"/>
        <end position="131"/>
    </location>
</feature>
<feature type="transmembrane region" description="Helical" evidence="1">
    <location>
        <begin position="30"/>
        <end position="50"/>
    </location>
</feature>
<feature type="transmembrane region" description="Helical" evidence="1">
    <location>
        <begin position="63"/>
        <end position="83"/>
    </location>
</feature>
<feature type="transmembrane region" description="Helical" evidence="1">
    <location>
        <begin position="109"/>
        <end position="129"/>
    </location>
</feature>
<keyword id="KW-0997">Cell inner membrane</keyword>
<keyword id="KW-1003">Cell membrane</keyword>
<keyword id="KW-0472">Membrane</keyword>
<keyword id="KW-1185">Reference proteome</keyword>
<keyword id="KW-0812">Transmembrane</keyword>
<keyword id="KW-1133">Transmembrane helix</keyword>
<name>FRDC_ECO55</name>
<sequence>MTTKRKPYVRPMTSTWWKKLPFYRFYMLREGTAVPAVWFSIELIFGLFALKNGPEAWAGFVDFLQNPVIVIINLITLAAALLHTKTWFELAPKAANIIVKDEKMGPEPIIKSLWAVTVVATIVILFVALYW</sequence>
<proteinExistence type="inferred from homology"/>
<dbReference type="EMBL" id="CU928145">
    <property type="protein sequence ID" value="CAV01614.1"/>
    <property type="molecule type" value="Genomic_DNA"/>
</dbReference>
<dbReference type="RefSeq" id="WP_000208757.1">
    <property type="nucleotide sequence ID" value="NZ_CP028304.1"/>
</dbReference>
<dbReference type="SMR" id="B7LC13"/>
<dbReference type="GeneID" id="93777670"/>
<dbReference type="KEGG" id="eck:EC55989_4709"/>
<dbReference type="HOGENOM" id="CLU_156492_0_0_6"/>
<dbReference type="Proteomes" id="UP000000746">
    <property type="component" value="Chromosome"/>
</dbReference>
<dbReference type="GO" id="GO:0045283">
    <property type="term" value="C:fumarate reductase complex"/>
    <property type="evidence" value="ECO:0007669"/>
    <property type="project" value="UniProtKB-UniRule"/>
</dbReference>
<dbReference type="GO" id="GO:0005886">
    <property type="term" value="C:plasma membrane"/>
    <property type="evidence" value="ECO:0007669"/>
    <property type="project" value="UniProtKB-SubCell"/>
</dbReference>
<dbReference type="GO" id="GO:0000104">
    <property type="term" value="F:succinate dehydrogenase activity"/>
    <property type="evidence" value="ECO:0007669"/>
    <property type="project" value="UniProtKB-UniRule"/>
</dbReference>
<dbReference type="CDD" id="cd00546">
    <property type="entry name" value="QFR_TypeD_subunitC"/>
    <property type="match status" value="1"/>
</dbReference>
<dbReference type="FunFam" id="1.20.1300.10:FF:000003">
    <property type="entry name" value="Fumarate reductase subunit C"/>
    <property type="match status" value="1"/>
</dbReference>
<dbReference type="Gene3D" id="1.20.1300.10">
    <property type="entry name" value="Fumarate reductase/succinate dehydrogenase, transmembrane subunit"/>
    <property type="match status" value="1"/>
</dbReference>
<dbReference type="HAMAP" id="MF_00708">
    <property type="entry name" value="Fumarate_red_C"/>
    <property type="match status" value="1"/>
</dbReference>
<dbReference type="InterPro" id="IPR003510">
    <property type="entry name" value="Fumarate_red_C"/>
</dbReference>
<dbReference type="InterPro" id="IPR034804">
    <property type="entry name" value="SQR/QFR_C/D"/>
</dbReference>
<dbReference type="NCBIfam" id="NF003445">
    <property type="entry name" value="PRK04987.1"/>
    <property type="match status" value="1"/>
</dbReference>
<dbReference type="Pfam" id="PF02300">
    <property type="entry name" value="Fumarate_red_C"/>
    <property type="match status" value="1"/>
</dbReference>
<dbReference type="PIRSF" id="PIRSF000180">
    <property type="entry name" value="FrdC"/>
    <property type="match status" value="1"/>
</dbReference>
<dbReference type="SUPFAM" id="SSF81343">
    <property type="entry name" value="Fumarate reductase respiratory complex transmembrane subunits"/>
    <property type="match status" value="1"/>
</dbReference>
<reference key="1">
    <citation type="journal article" date="2009" name="PLoS Genet.">
        <title>Organised genome dynamics in the Escherichia coli species results in highly diverse adaptive paths.</title>
        <authorList>
            <person name="Touchon M."/>
            <person name="Hoede C."/>
            <person name="Tenaillon O."/>
            <person name="Barbe V."/>
            <person name="Baeriswyl S."/>
            <person name="Bidet P."/>
            <person name="Bingen E."/>
            <person name="Bonacorsi S."/>
            <person name="Bouchier C."/>
            <person name="Bouvet O."/>
            <person name="Calteau A."/>
            <person name="Chiapello H."/>
            <person name="Clermont O."/>
            <person name="Cruveiller S."/>
            <person name="Danchin A."/>
            <person name="Diard M."/>
            <person name="Dossat C."/>
            <person name="Karoui M.E."/>
            <person name="Frapy E."/>
            <person name="Garry L."/>
            <person name="Ghigo J.M."/>
            <person name="Gilles A.M."/>
            <person name="Johnson J."/>
            <person name="Le Bouguenec C."/>
            <person name="Lescat M."/>
            <person name="Mangenot S."/>
            <person name="Martinez-Jehanne V."/>
            <person name="Matic I."/>
            <person name="Nassif X."/>
            <person name="Oztas S."/>
            <person name="Petit M.A."/>
            <person name="Pichon C."/>
            <person name="Rouy Z."/>
            <person name="Ruf C.S."/>
            <person name="Schneider D."/>
            <person name="Tourret J."/>
            <person name="Vacherie B."/>
            <person name="Vallenet D."/>
            <person name="Medigue C."/>
            <person name="Rocha E.P.C."/>
            <person name="Denamur E."/>
        </authorList>
    </citation>
    <scope>NUCLEOTIDE SEQUENCE [LARGE SCALE GENOMIC DNA]</scope>
    <source>
        <strain>55989 / EAEC</strain>
    </source>
</reference>
<comment type="function">
    <text evidence="1">Two distinct, membrane-bound, FAD-containing enzymes are responsible for the catalysis of fumarate and succinate interconversion; fumarate reductase is used in anaerobic growth, and succinate dehydrogenase is used in aerobic growth. Anchors the catalytic components of the fumarate reductase complex to the cell inner membrane, binds quinones.</text>
</comment>
<comment type="subunit">
    <text evidence="1">Part of an enzyme complex containing four subunits: a flavoprotein (FrdA), an iron-sulfur protein (FrdB), and two hydrophobic anchor proteins (FrdC and FrdD).</text>
</comment>
<comment type="subcellular location">
    <subcellularLocation>
        <location evidence="1">Cell inner membrane</location>
        <topology evidence="1">Multi-pass membrane protein</topology>
    </subcellularLocation>
</comment>
<comment type="similarity">
    <text evidence="1">Belongs to the FrdC family.</text>
</comment>
<protein>
    <recommendedName>
        <fullName evidence="1">Fumarate reductase subunit C</fullName>
    </recommendedName>
    <alternativeName>
        <fullName evidence="1">Fumarate reductase 15 kDa hydrophobic protein</fullName>
    </alternativeName>
    <alternativeName>
        <fullName evidence="1">Quinol-fumarate reductase subunit C</fullName>
        <shortName evidence="1">QFR subunit C</shortName>
    </alternativeName>
</protein>
<accession>B7LC13</accession>
<organism>
    <name type="scientific">Escherichia coli (strain 55989 / EAEC)</name>
    <dbReference type="NCBI Taxonomy" id="585055"/>
    <lineage>
        <taxon>Bacteria</taxon>
        <taxon>Pseudomonadati</taxon>
        <taxon>Pseudomonadota</taxon>
        <taxon>Gammaproteobacteria</taxon>
        <taxon>Enterobacterales</taxon>
        <taxon>Enterobacteriaceae</taxon>
        <taxon>Escherichia</taxon>
    </lineage>
</organism>
<evidence type="ECO:0000255" key="1">
    <source>
        <dbReference type="HAMAP-Rule" id="MF_00708"/>
    </source>
</evidence>
<gene>
    <name evidence="1" type="primary">frdC</name>
    <name type="ordered locus">EC55989_4709</name>
</gene>